<protein>
    <recommendedName>
        <fullName>Polyenoic fatty acid isomerase</fullName>
        <shortName>PFI</shortName>
        <ecNumber>5.3.3.13</ecNumber>
    </recommendedName>
</protein>
<name>PFI_PTIFI</name>
<feature type="signal peptide" evidence="1">
    <location>
        <begin position="1"/>
        <end position="21"/>
    </location>
</feature>
<feature type="chain" id="PRO_0000418869" description="Polyenoic fatty acid isomerase">
    <location>
        <begin position="22"/>
        <end position="500"/>
    </location>
</feature>
<feature type="sequence conflict" description="In Ref. 2; AA sequence." evidence="4" ref="2">
    <original>ES</original>
    <variation>SQ</variation>
    <location>
        <begin position="56"/>
        <end position="57"/>
    </location>
</feature>
<feature type="sequence conflict" description="In Ref. 2; AA sequence." evidence="4" ref="2">
    <original>G</original>
    <variation>Y</variation>
    <location>
        <position position="59"/>
    </location>
</feature>
<feature type="sequence conflict" description="In Ref. 1; AAL57200." evidence="4" ref="1">
    <original>AD</original>
    <variation>TN</variation>
    <location>
        <begin position="327"/>
        <end position="328"/>
    </location>
</feature>
<feature type="sequence conflict" description="In Ref. 1; AAL57200." evidence="4" ref="1">
    <original>N</original>
    <variation>D</variation>
    <location>
        <position position="367"/>
    </location>
</feature>
<feature type="sequence conflict" description="In Ref. 1; AAL57200." evidence="4" ref="1">
    <original>S</original>
    <variation>A</variation>
    <location>
        <position position="477"/>
    </location>
</feature>
<comment type="function">
    <text evidence="1">Involved in the biosynthesis of conjugated triene-containing fatty acids. Catalyzes the isomerization of a wide range of substrates containing three or more methylene interrupted olefins into a Z,E,E conjugated triene functionality. May be involved in a stress tolerance mechanism as response to intertidal habitats with direct sunlight, desiccation and high temperature. In vitro substrates include arachidonic acid ((5Z,8Z,11Z,14Z)-eicosatetraenoic acid), EPA ((5Z,8Z, 11Z,14Z,17Z)-eicosapentaenoic acid), DHA ((4Z,7Z,10Z,13Z,16Z,19Z)-docosahexenoic acid), adrenic acid ((7Z,10Z,13Z,16Z)-docosatetraenoic acid), anandamide (arachidonyl-N-ethanolamide) and eicosatrienoic acid ((5Z,8Z,11Z)-eicosatrienoic acid). Gamma-linolenic acid (18:3 6Z,9Z,12Z) and dihomo-gamma-linolenic acid (20:3 8Z,11Z,14Z) are transformed into mixtures of conjugated diene and triene fatty acids, linoleic acid is only transformed to a conjugated diene.</text>
</comment>
<comment type="catalytic activity">
    <reaction evidence="2 3">
        <text>(5Z,8Z,11Z,14Z,17Z)-eicosapentaenoate = (5Z,7E,9E,14Z,17Z)-icosapentaenoate</text>
        <dbReference type="Rhea" id="RHEA:14889"/>
        <dbReference type="ChEBI" id="CHEBI:58562"/>
        <dbReference type="ChEBI" id="CHEBI:60025"/>
        <dbReference type="EC" id="5.3.3.13"/>
    </reaction>
</comment>
<comment type="cofactor">
    <cofactor evidence="5">
        <name>an oxidized flavin</name>
        <dbReference type="ChEBI" id="CHEBI:60531"/>
    </cofactor>
</comment>
<comment type="biophysicochemical properties">
    <kinetics>
        <KM evidence="3">1.9 uM for (4Z,7Z,10Z,13Z,16Z,19Z)-docosahexenoic acid</KM>
        <KM evidence="3">17 uM for (7Z,10Z,13Z,16Z)-docosatetraenoic acid</KM>
        <KM evidence="3">9.6 uM for (5Z,8Z, 11Z,14Z,17Z)-eicosapentaenoic acid</KM>
        <KM evidence="3">25.5 uM for (5Z,8Z,11Z,14Z)-eicosatetraenoic acid</KM>
        <KM evidence="3">52.8 uM for (5Z,8Z,11Z)-eicosatrienoic acid</KM>
        <KM evidence="3">17.5 uM for arachidonyl-N-ethanolamide</KM>
        <Vmax evidence="3">1.84 umol/min/mg enzyme with (4Z,7Z,10Z,13Z,16Z,19Z)-docosahexenoic acid as substrate</Vmax>
        <Vmax evidence="3">1.1 umol/min/mg enzyme with (7Z,10Z,13Z,16Z)-docosatetraenoic acid as substrate</Vmax>
        <Vmax evidence="3">6.0 umol/min/mg enzyme with (5Z,8Z, 11Z,14Z,17Z)-eicosapentaenoic acid as substrate</Vmax>
        <Vmax evidence="3">2.78 umol/min/mg enzyme with (5Z,8Z,11Z,14Z)-eicosatetraenoic acid as substrate</Vmax>
        <Vmax evidence="3">0.31 umol/min/mg enzyme with (5Z,8Z,11Z)-eicosatrienoic acid as substrate</Vmax>
        <Vmax evidence="3">0.8 umol/min/mg enzyme with arachidonyl-N-ethanolamide as substrate</Vmax>
    </kinetics>
    <phDependence>
        <text evidence="3">Optimum pH is below pH 6.0 with (5Z,8Z,11Z,14Z,17Z)-eicosapentaenoic acid as substrate.</text>
    </phDependence>
</comment>
<comment type="subunit">
    <text evidence="5">Homodimer.</text>
</comment>
<comment type="PTM">
    <text evidence="1">Glycosylated.</text>
</comment>
<sequence>MSLNRVLHIFLIAYLACTALTHDFDDTIAVVGAGYSGLSAAFTLVKKGYTNVEIYESQGEVGGYVYSVDYNNVAHDLATYALTPAYWKFQEAMKSIGVGFCELDVAIVQTNSTPVSVPFEKWMAAYWAAKVPNPLNLVRKVSTQVSTYVEVWKKLFNMDFIDTSTKRTNRLFPLKTNDVDVLAQFSMPMKDFVALHKLDLLEPLFIQATDSQAYGPYDTTPALYYMVWFPPNLFNGEENTVPCGTYNSMQSMAEHMAEWLKSKGVTFHMNTKVTKISRATDGSSPSLLEEGVATPKLFDTIISTNKLPSANRAEVVTPLLPKEREAADTYEELQMFSALLETNRSDAIPTTGFLMVDADAIIAHDPNTGFWGCLNAERRGGYSDENAILSSDTVTRVSAIYYYTERANNERIDFSLDEKIQQVKTNLATWDSATWTNLTSRTFGGYFQRWRTPDVMGQKPWNLADIQGEGDVYYVNSAACGFESVGHVFDCADNLIKDFF</sequence>
<organism>
    <name type="scientific">Ptilota filicina</name>
    <name type="common">Red alga</name>
    <dbReference type="NCBI Taxonomy" id="153248"/>
    <lineage>
        <taxon>Eukaryota</taxon>
        <taxon>Rhodophyta</taxon>
        <taxon>Florideophyceae</taxon>
        <taxon>Rhodymeniophycidae</taxon>
        <taxon>Ceramiales</taxon>
        <taxon>Ceramiaceae</taxon>
        <taxon>Ptilota</taxon>
    </lineage>
</organism>
<accession>Q8W257</accession>
<accession>Q8W256</accession>
<evidence type="ECO:0000269" key="1">
    <source>
    </source>
</evidence>
<evidence type="ECO:0000269" key="2">
    <source>
    </source>
</evidence>
<evidence type="ECO:0000269" key="3">
    <source>
    </source>
</evidence>
<evidence type="ECO:0000305" key="4"/>
<evidence type="ECO:0000305" key="5">
    <source>
    </source>
</evidence>
<keyword id="KW-0903">Direct protein sequencing</keyword>
<keyword id="KW-0413">Isomerase</keyword>
<keyword id="KW-0732">Signal</keyword>
<dbReference type="EC" id="5.3.3.13"/>
<dbReference type="EMBL" id="AF354661">
    <property type="protein sequence ID" value="AAL57199.1"/>
    <property type="molecule type" value="mRNA"/>
</dbReference>
<dbReference type="EMBL" id="AF354662">
    <property type="protein sequence ID" value="AAL57200.1"/>
    <property type="molecule type" value="mRNA"/>
</dbReference>
<dbReference type="SMR" id="Q8W257"/>
<dbReference type="KEGG" id="ag:AAL57199"/>
<dbReference type="GO" id="GO:0016491">
    <property type="term" value="F:oxidoreductase activity"/>
    <property type="evidence" value="ECO:0007669"/>
    <property type="project" value="InterPro"/>
</dbReference>
<dbReference type="GO" id="GO:0034016">
    <property type="term" value="F:polyenoic fatty acid isomerase activity"/>
    <property type="evidence" value="ECO:0007669"/>
    <property type="project" value="UniProtKB-EC"/>
</dbReference>
<dbReference type="Gene3D" id="1.10.405.20">
    <property type="match status" value="1"/>
</dbReference>
<dbReference type="Gene3D" id="3.30.70.1990">
    <property type="match status" value="1"/>
</dbReference>
<dbReference type="Gene3D" id="3.50.50.60">
    <property type="entry name" value="FAD/NAD(P)-binding domain"/>
    <property type="match status" value="1"/>
</dbReference>
<dbReference type="InterPro" id="IPR002937">
    <property type="entry name" value="Amino_oxidase"/>
</dbReference>
<dbReference type="InterPro" id="IPR036188">
    <property type="entry name" value="FAD/NAD-bd_sf"/>
</dbReference>
<dbReference type="InterPro" id="IPR050464">
    <property type="entry name" value="Zeta_carotene_desat/Oxidored"/>
</dbReference>
<dbReference type="PANTHER" id="PTHR42923">
    <property type="entry name" value="PROTOPORPHYRINOGEN OXIDASE"/>
    <property type="match status" value="1"/>
</dbReference>
<dbReference type="Pfam" id="PF01593">
    <property type="entry name" value="Amino_oxidase"/>
    <property type="match status" value="1"/>
</dbReference>
<dbReference type="PRINTS" id="PR00419">
    <property type="entry name" value="ADXRDTASE"/>
</dbReference>
<dbReference type="SUPFAM" id="SSF51905">
    <property type="entry name" value="FAD/NAD(P)-binding domain"/>
    <property type="match status" value="1"/>
</dbReference>
<reference key="1">
    <citation type="submission" date="2001-02" db="EMBL/GenBank/DDBJ databases">
        <title>Polyenoic fatty acid isomerase from the marine alga Ptilota filicina.</title>
        <authorList>
            <person name="Zheng W."/>
            <person name="Wise M.L."/>
            <person name="Wyrick A."/>
            <person name="Metz J.G."/>
            <person name="Yuan L."/>
            <person name="Gerwick W.H."/>
        </authorList>
    </citation>
    <scope>NUCLEOTIDE SEQUENCE [MRNA]</scope>
</reference>
<reference key="2">
    <citation type="journal article" date="2002" name="Arch. Biochem. Biophys.">
        <title>Polyenoic fatty acid isomerase from the marine alga Ptilota filicina: protein characterization and functional expression of the cloned cDNA.</title>
        <authorList>
            <person name="Zheng W."/>
            <person name="Wise M.L."/>
            <person name="Wyrick A."/>
            <person name="Metz J.G."/>
            <person name="Yuan L."/>
            <person name="Gerwick W.H."/>
        </authorList>
    </citation>
    <scope>NUCLEOTIDE SEQUENCE [MRNA]</scope>
    <scope>PROTEIN SEQUENCE OF 22-59</scope>
    <scope>FUNCTION</scope>
    <scope>SUBUNIT</scope>
    <scope>GLYCOSYLATION</scope>
    <scope>COFACTOR</scope>
</reference>
<reference key="3">
    <citation type="journal article" date="1994" name="Biochemistry">
        <title>Biosynthesis of conjugated triene-containing fatty acids by a novel isomerase from the red marine alga Ptilota filicina.</title>
        <authorList>
            <person name="Wise M.L."/>
            <person name="Hamberg M."/>
            <person name="Gerwick W.H."/>
        </authorList>
    </citation>
    <scope>CATALYTIC ACTIVITY</scope>
</reference>
<reference key="4">
    <citation type="journal article" date="1997" name="Biochemistry">
        <title>Characterization of the substrate binding site of polyenoic fatty acid isomerase, a novel enzyme from the marine alga Ptilota filicina.</title>
        <authorList>
            <person name="Wise M.L."/>
            <person name="Rossi J."/>
            <person name="Gerwick W.H."/>
        </authorList>
    </citation>
    <scope>CATALYTIC ACTIVITY</scope>
    <scope>BIOPHYSICOCHEMICAL PROPERTIES</scope>
</reference>
<proteinExistence type="evidence at protein level"/>